<sequence>MTAEIKTGEKMIVFMVNGKEYAISVTQVKSIEKWQKPTRVPGVEPYICGVINLRGVVTPVIDLRKRLNLPEYEITDETRIIIIAYRDIEVGWIVDEANDVITVHESEIESAPEGVQKDTDVSIEQIVKQENRLLNIIDANAVLDKESSQSAVPDQA</sequence>
<gene>
    <name type="primary">cheW</name>
    <name type="ordered locus">BSU16440</name>
</gene>
<comment type="function">
    <text evidence="2 3">Involved in the transmission of sensory signals from the chemoreceptors to the flagellar motors. CheV and CheW are involved in the coupling of the methyl-accepting chemoreceptors to the central two-component kinase CheA; they are both necessary for efficient chemotaxis.</text>
</comment>
<comment type="subcellular location">
    <subcellularLocation>
        <location>Cytoplasm</location>
    </subcellularLocation>
</comment>
<comment type="disruption phenotype">
    <text evidence="2 3">Chemotaxis is substantially impaired, with a 30-fold reduction in the efficiency of chemotaxis with aspartate and 11-fold reduction with 2-deoxyglucose. Inactivation of cheW appears to have a subtle effect on chemotactic behavior in the absence of chemoeffectors: the bacteria display a smooth swimming bias, with some tumbling. A double mutant lacking both CheV and CheW has a strong tumble bias, does not respond to addition of attractant, shows essentially no accumulation in capillary assays, and has greatly reduced methyl turnover on the methyl-accepting chemotaxis proteins (MCPs).</text>
</comment>
<proteinExistence type="evidence at protein level"/>
<evidence type="ECO:0000255" key="1">
    <source>
        <dbReference type="PROSITE-ProRule" id="PRU00052"/>
    </source>
</evidence>
<evidence type="ECO:0000269" key="2">
    <source>
    </source>
</evidence>
<evidence type="ECO:0000269" key="3">
    <source>
    </source>
</evidence>
<accession>P39802</accession>
<keyword id="KW-0145">Chemotaxis</keyword>
<keyword id="KW-0963">Cytoplasm</keyword>
<keyword id="KW-1185">Reference proteome</keyword>
<feature type="chain" id="PRO_0000198339" description="Chemotaxis protein CheW">
    <location>
        <begin position="1"/>
        <end position="156"/>
    </location>
</feature>
<feature type="domain" description="CheW-like" evidence="1">
    <location>
        <begin position="8"/>
        <end position="148"/>
    </location>
</feature>
<protein>
    <recommendedName>
        <fullName>Chemotaxis protein CheW</fullName>
    </recommendedName>
    <alternativeName>
        <fullName>Coupling protein CheW</fullName>
    </alternativeName>
</protein>
<name>CHEW_BACSU</name>
<dbReference type="EMBL" id="S38086">
    <property type="protein sequence ID" value="AAB22364.2"/>
    <property type="molecule type" value="Genomic_DNA"/>
</dbReference>
<dbReference type="EMBL" id="AL009126">
    <property type="protein sequence ID" value="CAB13517.1"/>
    <property type="molecule type" value="Genomic_DNA"/>
</dbReference>
<dbReference type="PIR" id="C69599">
    <property type="entry name" value="C69599"/>
</dbReference>
<dbReference type="RefSeq" id="NP_389526.1">
    <property type="nucleotide sequence ID" value="NC_000964.3"/>
</dbReference>
<dbReference type="RefSeq" id="WP_003231938.1">
    <property type="nucleotide sequence ID" value="NZ_OZ025638.1"/>
</dbReference>
<dbReference type="SMR" id="P39802"/>
<dbReference type="FunCoup" id="P39802">
    <property type="interactions" value="263"/>
</dbReference>
<dbReference type="STRING" id="224308.BSU16440"/>
<dbReference type="jPOST" id="P39802"/>
<dbReference type="PaxDb" id="224308-BSU16440"/>
<dbReference type="EnsemblBacteria" id="CAB13517">
    <property type="protein sequence ID" value="CAB13517"/>
    <property type="gene ID" value="BSU_16440"/>
</dbReference>
<dbReference type="GeneID" id="86873846"/>
<dbReference type="GeneID" id="939957"/>
<dbReference type="KEGG" id="bsu:BSU16440"/>
<dbReference type="PATRIC" id="fig|224308.179.peg.1785"/>
<dbReference type="eggNOG" id="COG0835">
    <property type="taxonomic scope" value="Bacteria"/>
</dbReference>
<dbReference type="InParanoid" id="P39802"/>
<dbReference type="OrthoDB" id="9794382at2"/>
<dbReference type="PhylomeDB" id="P39802"/>
<dbReference type="BioCyc" id="BSUB:BSU16440-MONOMER"/>
<dbReference type="Proteomes" id="UP000001570">
    <property type="component" value="Chromosome"/>
</dbReference>
<dbReference type="GO" id="GO:0005829">
    <property type="term" value="C:cytosol"/>
    <property type="evidence" value="ECO:0000318"/>
    <property type="project" value="GO_Central"/>
</dbReference>
<dbReference type="GO" id="GO:0006935">
    <property type="term" value="P:chemotaxis"/>
    <property type="evidence" value="ECO:0000316"/>
    <property type="project" value="CACAO"/>
</dbReference>
<dbReference type="GO" id="GO:0042333">
    <property type="term" value="P:chemotaxis to oxidizable substrate"/>
    <property type="evidence" value="ECO:0000315"/>
    <property type="project" value="CACAO"/>
</dbReference>
<dbReference type="GO" id="GO:0007165">
    <property type="term" value="P:signal transduction"/>
    <property type="evidence" value="ECO:0007669"/>
    <property type="project" value="InterPro"/>
</dbReference>
<dbReference type="CDD" id="cd00732">
    <property type="entry name" value="CheW"/>
    <property type="match status" value="1"/>
</dbReference>
<dbReference type="FunFam" id="2.40.50.180:FF:000002">
    <property type="entry name" value="Chemotaxis protein CheW"/>
    <property type="match status" value="1"/>
</dbReference>
<dbReference type="Gene3D" id="2.40.50.180">
    <property type="entry name" value="CheA-289, Domain 4"/>
    <property type="match status" value="1"/>
</dbReference>
<dbReference type="Gene3D" id="2.30.30.40">
    <property type="entry name" value="SH3 Domains"/>
    <property type="match status" value="1"/>
</dbReference>
<dbReference type="InterPro" id="IPR039315">
    <property type="entry name" value="CheW"/>
</dbReference>
<dbReference type="InterPro" id="IPR036061">
    <property type="entry name" value="CheW-like_dom_sf"/>
</dbReference>
<dbReference type="InterPro" id="IPR002545">
    <property type="entry name" value="CheW-lke_dom"/>
</dbReference>
<dbReference type="PANTHER" id="PTHR22617:SF23">
    <property type="entry name" value="CHEMOTAXIS PROTEIN CHEW"/>
    <property type="match status" value="1"/>
</dbReference>
<dbReference type="PANTHER" id="PTHR22617">
    <property type="entry name" value="CHEMOTAXIS SENSOR HISTIDINE KINASE-RELATED"/>
    <property type="match status" value="1"/>
</dbReference>
<dbReference type="Pfam" id="PF01584">
    <property type="entry name" value="CheW"/>
    <property type="match status" value="1"/>
</dbReference>
<dbReference type="SMART" id="SM00260">
    <property type="entry name" value="CheW"/>
    <property type="match status" value="1"/>
</dbReference>
<dbReference type="SUPFAM" id="SSF50341">
    <property type="entry name" value="CheW-like"/>
    <property type="match status" value="1"/>
</dbReference>
<dbReference type="PROSITE" id="PS50851">
    <property type="entry name" value="CHEW"/>
    <property type="match status" value="1"/>
</dbReference>
<organism>
    <name type="scientific">Bacillus subtilis (strain 168)</name>
    <dbReference type="NCBI Taxonomy" id="224308"/>
    <lineage>
        <taxon>Bacteria</taxon>
        <taxon>Bacillati</taxon>
        <taxon>Bacillota</taxon>
        <taxon>Bacilli</taxon>
        <taxon>Bacillales</taxon>
        <taxon>Bacillaceae</taxon>
        <taxon>Bacillus</taxon>
    </lineage>
</organism>
<reference key="1">
    <citation type="journal article" date="1992" name="J. Biol. Chem.">
        <title>Sequence and characterization of Bacillus subtilis CheW.</title>
        <authorList>
            <person name="Hanlon D.W."/>
            <person name="Marquez-Magana L.M."/>
            <person name="Carpenter P.B."/>
            <person name="Chamberlin M.J."/>
            <person name="Ordal G.W."/>
        </authorList>
    </citation>
    <scope>NUCLEOTIDE SEQUENCE [GENOMIC DNA]</scope>
    <scope>FUNCTION IN CHEMOTAXIS</scope>
    <scope>DISRUPTION PHENOTYPE</scope>
    <source>
        <strain>168 / OI1085</strain>
    </source>
</reference>
<reference key="2">
    <citation type="journal article" date="1997" name="Nature">
        <title>The complete genome sequence of the Gram-positive bacterium Bacillus subtilis.</title>
        <authorList>
            <person name="Kunst F."/>
            <person name="Ogasawara N."/>
            <person name="Moszer I."/>
            <person name="Albertini A.M."/>
            <person name="Alloni G."/>
            <person name="Azevedo V."/>
            <person name="Bertero M.G."/>
            <person name="Bessieres P."/>
            <person name="Bolotin A."/>
            <person name="Borchert S."/>
            <person name="Borriss R."/>
            <person name="Boursier L."/>
            <person name="Brans A."/>
            <person name="Braun M."/>
            <person name="Brignell S.C."/>
            <person name="Bron S."/>
            <person name="Brouillet S."/>
            <person name="Bruschi C.V."/>
            <person name="Caldwell B."/>
            <person name="Capuano V."/>
            <person name="Carter N.M."/>
            <person name="Choi S.-K."/>
            <person name="Codani J.-J."/>
            <person name="Connerton I.F."/>
            <person name="Cummings N.J."/>
            <person name="Daniel R.A."/>
            <person name="Denizot F."/>
            <person name="Devine K.M."/>
            <person name="Duesterhoeft A."/>
            <person name="Ehrlich S.D."/>
            <person name="Emmerson P.T."/>
            <person name="Entian K.-D."/>
            <person name="Errington J."/>
            <person name="Fabret C."/>
            <person name="Ferrari E."/>
            <person name="Foulger D."/>
            <person name="Fritz C."/>
            <person name="Fujita M."/>
            <person name="Fujita Y."/>
            <person name="Fuma S."/>
            <person name="Galizzi A."/>
            <person name="Galleron N."/>
            <person name="Ghim S.-Y."/>
            <person name="Glaser P."/>
            <person name="Goffeau A."/>
            <person name="Golightly E.J."/>
            <person name="Grandi G."/>
            <person name="Guiseppi G."/>
            <person name="Guy B.J."/>
            <person name="Haga K."/>
            <person name="Haiech J."/>
            <person name="Harwood C.R."/>
            <person name="Henaut A."/>
            <person name="Hilbert H."/>
            <person name="Holsappel S."/>
            <person name="Hosono S."/>
            <person name="Hullo M.-F."/>
            <person name="Itaya M."/>
            <person name="Jones L.-M."/>
            <person name="Joris B."/>
            <person name="Karamata D."/>
            <person name="Kasahara Y."/>
            <person name="Klaerr-Blanchard M."/>
            <person name="Klein C."/>
            <person name="Kobayashi Y."/>
            <person name="Koetter P."/>
            <person name="Koningstein G."/>
            <person name="Krogh S."/>
            <person name="Kumano M."/>
            <person name="Kurita K."/>
            <person name="Lapidus A."/>
            <person name="Lardinois S."/>
            <person name="Lauber J."/>
            <person name="Lazarevic V."/>
            <person name="Lee S.-M."/>
            <person name="Levine A."/>
            <person name="Liu H."/>
            <person name="Masuda S."/>
            <person name="Mauel C."/>
            <person name="Medigue C."/>
            <person name="Medina N."/>
            <person name="Mellado R.P."/>
            <person name="Mizuno M."/>
            <person name="Moestl D."/>
            <person name="Nakai S."/>
            <person name="Noback M."/>
            <person name="Noone D."/>
            <person name="O'Reilly M."/>
            <person name="Ogawa K."/>
            <person name="Ogiwara A."/>
            <person name="Oudega B."/>
            <person name="Park S.-H."/>
            <person name="Parro V."/>
            <person name="Pohl T.M."/>
            <person name="Portetelle D."/>
            <person name="Porwollik S."/>
            <person name="Prescott A.M."/>
            <person name="Presecan E."/>
            <person name="Pujic P."/>
            <person name="Purnelle B."/>
            <person name="Rapoport G."/>
            <person name="Rey M."/>
            <person name="Reynolds S."/>
            <person name="Rieger M."/>
            <person name="Rivolta C."/>
            <person name="Rocha E."/>
            <person name="Roche B."/>
            <person name="Rose M."/>
            <person name="Sadaie Y."/>
            <person name="Sato T."/>
            <person name="Scanlan E."/>
            <person name="Schleich S."/>
            <person name="Schroeter R."/>
            <person name="Scoffone F."/>
            <person name="Sekiguchi J."/>
            <person name="Sekowska A."/>
            <person name="Seror S.J."/>
            <person name="Serror P."/>
            <person name="Shin B.-S."/>
            <person name="Soldo B."/>
            <person name="Sorokin A."/>
            <person name="Tacconi E."/>
            <person name="Takagi T."/>
            <person name="Takahashi H."/>
            <person name="Takemaru K."/>
            <person name="Takeuchi M."/>
            <person name="Tamakoshi A."/>
            <person name="Tanaka T."/>
            <person name="Terpstra P."/>
            <person name="Tognoni A."/>
            <person name="Tosato V."/>
            <person name="Uchiyama S."/>
            <person name="Vandenbol M."/>
            <person name="Vannier F."/>
            <person name="Vassarotti A."/>
            <person name="Viari A."/>
            <person name="Wambutt R."/>
            <person name="Wedler E."/>
            <person name="Wedler H."/>
            <person name="Weitzenegger T."/>
            <person name="Winters P."/>
            <person name="Wipat A."/>
            <person name="Yamamoto H."/>
            <person name="Yamane K."/>
            <person name="Yasumoto K."/>
            <person name="Yata K."/>
            <person name="Yoshida K."/>
            <person name="Yoshikawa H.-F."/>
            <person name="Zumstein E."/>
            <person name="Yoshikawa H."/>
            <person name="Danchin A."/>
        </authorList>
    </citation>
    <scope>NUCLEOTIDE SEQUENCE [LARGE SCALE GENOMIC DNA]</scope>
    <source>
        <strain>168</strain>
    </source>
</reference>
<reference key="3">
    <citation type="journal article" date="1994" name="J. Bacteriol.">
        <title>Chemotaxis in Bacillus subtilis requires either of two functionally redundant CheW homologs.</title>
        <authorList>
            <person name="Rosario M.M.L."/>
            <person name="Fredrick K.L."/>
            <person name="Ordal G.W."/>
            <person name="Helmann J.D."/>
        </authorList>
    </citation>
    <scope>FUNCTION</scope>
    <scope>DISRUPTION PHENOTYPE</scope>
    <source>
        <strain>168 / OI1085</strain>
    </source>
</reference>